<feature type="chain" id="PRO_0000374880" description="Ribosomal protein uS12 methylthiotransferase RimO">
    <location>
        <begin position="1"/>
        <end position="439"/>
    </location>
</feature>
<feature type="domain" description="MTTase N-terminal" evidence="1">
    <location>
        <begin position="3"/>
        <end position="118"/>
    </location>
</feature>
<feature type="domain" description="Radical SAM core" evidence="2">
    <location>
        <begin position="143"/>
        <end position="370"/>
    </location>
</feature>
<feature type="domain" description="TRAM" evidence="1">
    <location>
        <begin position="373"/>
        <end position="438"/>
    </location>
</feature>
<feature type="binding site" evidence="1">
    <location>
        <position position="12"/>
    </location>
    <ligand>
        <name>[4Fe-4S] cluster</name>
        <dbReference type="ChEBI" id="CHEBI:49883"/>
        <label>1</label>
    </ligand>
</feature>
<feature type="binding site" evidence="1">
    <location>
        <position position="48"/>
    </location>
    <ligand>
        <name>[4Fe-4S] cluster</name>
        <dbReference type="ChEBI" id="CHEBI:49883"/>
        <label>1</label>
    </ligand>
</feature>
<feature type="binding site" evidence="1">
    <location>
        <position position="81"/>
    </location>
    <ligand>
        <name>[4Fe-4S] cluster</name>
        <dbReference type="ChEBI" id="CHEBI:49883"/>
        <label>1</label>
    </ligand>
</feature>
<feature type="binding site" evidence="1">
    <location>
        <position position="157"/>
    </location>
    <ligand>
        <name>[4Fe-4S] cluster</name>
        <dbReference type="ChEBI" id="CHEBI:49883"/>
        <label>2</label>
        <note>4Fe-4S-S-AdoMet</note>
    </ligand>
</feature>
<feature type="binding site" evidence="1">
    <location>
        <position position="161"/>
    </location>
    <ligand>
        <name>[4Fe-4S] cluster</name>
        <dbReference type="ChEBI" id="CHEBI:49883"/>
        <label>2</label>
        <note>4Fe-4S-S-AdoMet</note>
    </ligand>
</feature>
<feature type="binding site" evidence="1">
    <location>
        <position position="164"/>
    </location>
    <ligand>
        <name>[4Fe-4S] cluster</name>
        <dbReference type="ChEBI" id="CHEBI:49883"/>
        <label>2</label>
        <note>4Fe-4S-S-AdoMet</note>
    </ligand>
</feature>
<comment type="function">
    <text evidence="1">Catalyzes the methylthiolation of an aspartic acid residue of ribosomal protein uS12.</text>
</comment>
<comment type="catalytic activity">
    <reaction evidence="1">
        <text>L-aspartate(89)-[ribosomal protein uS12]-hydrogen + (sulfur carrier)-SH + AH2 + 2 S-adenosyl-L-methionine = 3-methylsulfanyl-L-aspartate(89)-[ribosomal protein uS12]-hydrogen + (sulfur carrier)-H + 5'-deoxyadenosine + L-methionine + A + S-adenosyl-L-homocysteine + 2 H(+)</text>
        <dbReference type="Rhea" id="RHEA:37087"/>
        <dbReference type="Rhea" id="RHEA-COMP:10460"/>
        <dbReference type="Rhea" id="RHEA-COMP:10461"/>
        <dbReference type="Rhea" id="RHEA-COMP:14737"/>
        <dbReference type="Rhea" id="RHEA-COMP:14739"/>
        <dbReference type="ChEBI" id="CHEBI:13193"/>
        <dbReference type="ChEBI" id="CHEBI:15378"/>
        <dbReference type="ChEBI" id="CHEBI:17319"/>
        <dbReference type="ChEBI" id="CHEBI:17499"/>
        <dbReference type="ChEBI" id="CHEBI:29917"/>
        <dbReference type="ChEBI" id="CHEBI:29961"/>
        <dbReference type="ChEBI" id="CHEBI:57844"/>
        <dbReference type="ChEBI" id="CHEBI:57856"/>
        <dbReference type="ChEBI" id="CHEBI:59789"/>
        <dbReference type="ChEBI" id="CHEBI:64428"/>
        <dbReference type="ChEBI" id="CHEBI:73599"/>
        <dbReference type="EC" id="2.8.4.4"/>
    </reaction>
</comment>
<comment type="cofactor">
    <cofactor evidence="1">
        <name>[4Fe-4S] cluster</name>
        <dbReference type="ChEBI" id="CHEBI:49883"/>
    </cofactor>
    <text evidence="1">Binds 2 [4Fe-4S] clusters. One cluster is coordinated with 3 cysteines and an exchangeable S-adenosyl-L-methionine.</text>
</comment>
<comment type="subcellular location">
    <subcellularLocation>
        <location evidence="1">Cytoplasm</location>
    </subcellularLocation>
</comment>
<comment type="similarity">
    <text evidence="1">Belongs to the methylthiotransferase family. RimO subfamily.</text>
</comment>
<protein>
    <recommendedName>
        <fullName evidence="1">Ribosomal protein uS12 methylthiotransferase RimO</fullName>
        <shortName evidence="1">uS12 MTTase</shortName>
        <shortName evidence="1">uS12 methylthiotransferase</shortName>
        <ecNumber evidence="1">2.8.4.4</ecNumber>
    </recommendedName>
    <alternativeName>
        <fullName evidence="1">Ribosomal protein uS12 (aspartate-C(3))-methylthiotransferase</fullName>
    </alternativeName>
    <alternativeName>
        <fullName evidence="1">Ribosome maturation factor RimO</fullName>
    </alternativeName>
</protein>
<keyword id="KW-0004">4Fe-4S</keyword>
<keyword id="KW-0963">Cytoplasm</keyword>
<keyword id="KW-0408">Iron</keyword>
<keyword id="KW-0411">Iron-sulfur</keyword>
<keyword id="KW-0479">Metal-binding</keyword>
<keyword id="KW-0949">S-adenosyl-L-methionine</keyword>
<keyword id="KW-0808">Transferase</keyword>
<gene>
    <name evidence="1" type="primary">rimO</name>
    <name type="ordered locus">LBL_2153</name>
</gene>
<proteinExistence type="inferred from homology"/>
<organism>
    <name type="scientific">Leptospira borgpetersenii serovar Hardjo-bovis (strain L550)</name>
    <dbReference type="NCBI Taxonomy" id="355276"/>
    <lineage>
        <taxon>Bacteria</taxon>
        <taxon>Pseudomonadati</taxon>
        <taxon>Spirochaetota</taxon>
        <taxon>Spirochaetia</taxon>
        <taxon>Leptospirales</taxon>
        <taxon>Leptospiraceae</taxon>
        <taxon>Leptospira</taxon>
    </lineage>
</organism>
<name>RIMO_LEPBL</name>
<evidence type="ECO:0000255" key="1">
    <source>
        <dbReference type="HAMAP-Rule" id="MF_01865"/>
    </source>
</evidence>
<evidence type="ECO:0000255" key="2">
    <source>
        <dbReference type="PROSITE-ProRule" id="PRU01266"/>
    </source>
</evidence>
<dbReference type="EC" id="2.8.4.4" evidence="1"/>
<dbReference type="EMBL" id="CP000348">
    <property type="protein sequence ID" value="ABJ79565.1"/>
    <property type="molecule type" value="Genomic_DNA"/>
</dbReference>
<dbReference type="RefSeq" id="WP_011670604.1">
    <property type="nucleotide sequence ID" value="NC_008508.1"/>
</dbReference>
<dbReference type="SMR" id="Q04ZD0"/>
<dbReference type="KEGG" id="lbl:LBL_2153"/>
<dbReference type="PATRIC" id="fig|355276.3.peg.2745"/>
<dbReference type="HOGENOM" id="CLU_018697_0_1_12"/>
<dbReference type="GO" id="GO:0005829">
    <property type="term" value="C:cytosol"/>
    <property type="evidence" value="ECO:0007669"/>
    <property type="project" value="TreeGrafter"/>
</dbReference>
<dbReference type="GO" id="GO:0051539">
    <property type="term" value="F:4 iron, 4 sulfur cluster binding"/>
    <property type="evidence" value="ECO:0007669"/>
    <property type="project" value="UniProtKB-UniRule"/>
</dbReference>
<dbReference type="GO" id="GO:0035599">
    <property type="term" value="F:aspartic acid methylthiotransferase activity"/>
    <property type="evidence" value="ECO:0007669"/>
    <property type="project" value="TreeGrafter"/>
</dbReference>
<dbReference type="GO" id="GO:0046872">
    <property type="term" value="F:metal ion binding"/>
    <property type="evidence" value="ECO:0007669"/>
    <property type="project" value="UniProtKB-KW"/>
</dbReference>
<dbReference type="GO" id="GO:0103039">
    <property type="term" value="F:protein methylthiotransferase activity"/>
    <property type="evidence" value="ECO:0007669"/>
    <property type="project" value="UniProtKB-EC"/>
</dbReference>
<dbReference type="GO" id="GO:0006400">
    <property type="term" value="P:tRNA modification"/>
    <property type="evidence" value="ECO:0007669"/>
    <property type="project" value="InterPro"/>
</dbReference>
<dbReference type="CDD" id="cd01335">
    <property type="entry name" value="Radical_SAM"/>
    <property type="match status" value="1"/>
</dbReference>
<dbReference type="FunFam" id="3.40.50.12160:FF:000010">
    <property type="entry name" value="Ribosomal protein S12 methylthiotransferase RimO"/>
    <property type="match status" value="1"/>
</dbReference>
<dbReference type="FunFam" id="3.80.30.20:FF:000001">
    <property type="entry name" value="tRNA-2-methylthio-N(6)-dimethylallyladenosine synthase 2"/>
    <property type="match status" value="1"/>
</dbReference>
<dbReference type="Gene3D" id="3.40.50.12160">
    <property type="entry name" value="Methylthiotransferase, N-terminal domain"/>
    <property type="match status" value="1"/>
</dbReference>
<dbReference type="Gene3D" id="2.40.50.140">
    <property type="entry name" value="Nucleic acid-binding proteins"/>
    <property type="match status" value="1"/>
</dbReference>
<dbReference type="Gene3D" id="3.80.30.20">
    <property type="entry name" value="tm_1862 like domain"/>
    <property type="match status" value="1"/>
</dbReference>
<dbReference type="HAMAP" id="MF_01865">
    <property type="entry name" value="MTTase_RimO"/>
    <property type="match status" value="1"/>
</dbReference>
<dbReference type="InterPro" id="IPR006638">
    <property type="entry name" value="Elp3/MiaA/NifB-like_rSAM"/>
</dbReference>
<dbReference type="InterPro" id="IPR005839">
    <property type="entry name" value="Methylthiotransferase"/>
</dbReference>
<dbReference type="InterPro" id="IPR020612">
    <property type="entry name" value="Methylthiotransferase_CS"/>
</dbReference>
<dbReference type="InterPro" id="IPR013848">
    <property type="entry name" value="Methylthiotransferase_N"/>
</dbReference>
<dbReference type="InterPro" id="IPR038135">
    <property type="entry name" value="Methylthiotransferase_N_sf"/>
</dbReference>
<dbReference type="InterPro" id="IPR012340">
    <property type="entry name" value="NA-bd_OB-fold"/>
</dbReference>
<dbReference type="InterPro" id="IPR005840">
    <property type="entry name" value="Ribosomal_uS12_MeSTrfase_RimO"/>
</dbReference>
<dbReference type="InterPro" id="IPR007197">
    <property type="entry name" value="rSAM"/>
</dbReference>
<dbReference type="InterPro" id="IPR023404">
    <property type="entry name" value="rSAM_horseshoe"/>
</dbReference>
<dbReference type="InterPro" id="IPR002792">
    <property type="entry name" value="TRAM_dom"/>
</dbReference>
<dbReference type="NCBIfam" id="TIGR01125">
    <property type="entry name" value="30S ribosomal protein S12 methylthiotransferase RimO"/>
    <property type="match status" value="1"/>
</dbReference>
<dbReference type="NCBIfam" id="TIGR00089">
    <property type="entry name" value="MiaB/RimO family radical SAM methylthiotransferase"/>
    <property type="match status" value="1"/>
</dbReference>
<dbReference type="PANTHER" id="PTHR43837">
    <property type="entry name" value="RIBOSOMAL PROTEIN S12 METHYLTHIOTRANSFERASE RIMO"/>
    <property type="match status" value="1"/>
</dbReference>
<dbReference type="PANTHER" id="PTHR43837:SF1">
    <property type="entry name" value="RIBOSOMAL PROTEIN US12 METHYLTHIOTRANSFERASE RIMO"/>
    <property type="match status" value="1"/>
</dbReference>
<dbReference type="Pfam" id="PF04055">
    <property type="entry name" value="Radical_SAM"/>
    <property type="match status" value="1"/>
</dbReference>
<dbReference type="Pfam" id="PF18693">
    <property type="entry name" value="TRAM_2"/>
    <property type="match status" value="1"/>
</dbReference>
<dbReference type="Pfam" id="PF00919">
    <property type="entry name" value="UPF0004"/>
    <property type="match status" value="1"/>
</dbReference>
<dbReference type="SFLD" id="SFLDG01082">
    <property type="entry name" value="B12-binding_domain_containing"/>
    <property type="match status" value="1"/>
</dbReference>
<dbReference type="SFLD" id="SFLDG01061">
    <property type="entry name" value="methylthiotransferase"/>
    <property type="match status" value="1"/>
</dbReference>
<dbReference type="SFLD" id="SFLDS00029">
    <property type="entry name" value="Radical_SAM"/>
    <property type="match status" value="1"/>
</dbReference>
<dbReference type="SMART" id="SM00729">
    <property type="entry name" value="Elp3"/>
    <property type="match status" value="1"/>
</dbReference>
<dbReference type="SUPFAM" id="SSF102114">
    <property type="entry name" value="Radical SAM enzymes"/>
    <property type="match status" value="1"/>
</dbReference>
<dbReference type="PROSITE" id="PS51449">
    <property type="entry name" value="MTTASE_N"/>
    <property type="match status" value="1"/>
</dbReference>
<dbReference type="PROSITE" id="PS01278">
    <property type="entry name" value="MTTASE_RADICAL"/>
    <property type="match status" value="1"/>
</dbReference>
<dbReference type="PROSITE" id="PS51918">
    <property type="entry name" value="RADICAL_SAM"/>
    <property type="match status" value="1"/>
</dbReference>
<reference key="1">
    <citation type="journal article" date="2006" name="Proc. Natl. Acad. Sci. U.S.A.">
        <title>Genome reduction in Leptospira borgpetersenii reflects limited transmission potential.</title>
        <authorList>
            <person name="Bulach D.M."/>
            <person name="Zuerner R.L."/>
            <person name="Wilson P."/>
            <person name="Seemann T."/>
            <person name="McGrath A."/>
            <person name="Cullen P.A."/>
            <person name="Davis J."/>
            <person name="Johnson M."/>
            <person name="Kuczek E."/>
            <person name="Alt D.P."/>
            <person name="Peterson-Burch B."/>
            <person name="Coppel R.L."/>
            <person name="Rood J.I."/>
            <person name="Davies J.K."/>
            <person name="Adler B."/>
        </authorList>
    </citation>
    <scope>NUCLEOTIDE SEQUENCE [LARGE SCALE GENOMIC DNA]</scope>
    <source>
        <strain>L550</strain>
    </source>
</reference>
<sequence>MNKKFYITTLGCPKNTADSMSMHHSLLEEGFTPATFAEESDFHFINTCTFIQSATEETIQTILSAAQVKKQNHQKLVVVGCFAERYPDNISSEIPEVDLFFGTGRYAQAGKILREKFPDLSPPKREFNDSLLERLKLSSEIENYSKPYAYVKVSDGCNRGCSFCIIPSFRGKFRESPVEDILRDVDRAIRAGAKEICLVSQDTVYYGRNSEVLLDMVRKVAEIDSLEVLRLLYLYPDKKTEKLLRLMGETPKIAPYLESPLQHVSSKILKSMNRVGESSTFKDLFALAREVKPGLEIRTSFIIGYPGEEPGDVDQVLRFIEETRPEKVNLFSYSPQEGTKGAELKQTVSEKEKSRRINLIRDVHLAILEEIHESRIGQTYDAIVDSVENDQAVVRRFQDAPEMDEVVYVDDISLIPGMIGKIRIDSFYEYDMNGTWISK</sequence>
<accession>Q04ZD0</accession>